<name>PH1_PRUSE</name>
<organism>
    <name type="scientific">Prunus serotina</name>
    <name type="common">Black cherry</name>
    <dbReference type="NCBI Taxonomy" id="23207"/>
    <lineage>
        <taxon>Eukaryota</taxon>
        <taxon>Viridiplantae</taxon>
        <taxon>Streptophyta</taxon>
        <taxon>Embryophyta</taxon>
        <taxon>Tracheophyta</taxon>
        <taxon>Spermatophyta</taxon>
        <taxon>Magnoliopsida</taxon>
        <taxon>eudicotyledons</taxon>
        <taxon>Gunneridae</taxon>
        <taxon>Pentapetalae</taxon>
        <taxon>rosids</taxon>
        <taxon>fabids</taxon>
        <taxon>Rosales</taxon>
        <taxon>Rosaceae</taxon>
        <taxon>Amygdaloideae</taxon>
        <taxon>Amygdaleae</taxon>
        <taxon>Prunus</taxon>
    </lineage>
</organism>
<dbReference type="EC" id="3.2.1.118"/>
<dbReference type="GO" id="GO:0050224">
    <property type="term" value="F:prunasin beta-glucosidase activity"/>
    <property type="evidence" value="ECO:0007669"/>
    <property type="project" value="UniProtKB-EC"/>
</dbReference>
<reference key="1">
    <citation type="journal article" date="1992" name="Plant Physiol.">
        <title>Prunus serotina amygdalin hydrolase and prunasin hydrolase: purification, N-terminal sequencing, and antibody production.</title>
        <authorList>
            <person name="Li C.P."/>
            <person name="Swain E."/>
            <person name="Poulton J.E."/>
        </authorList>
    </citation>
    <scope>PROTEIN SEQUENCE</scope>
    <source>
        <tissue>Seed</tissue>
    </source>
</reference>
<feature type="chain" id="PRO_0000058367" description="Prunasin beta-glucosidase 1">
    <location>
        <begin position="1"/>
        <end position="14" status="greater than"/>
    </location>
</feature>
<feature type="non-terminal residue">
    <location>
        <position position="14"/>
    </location>
</feature>
<keyword id="KW-0903">Direct protein sequencing</keyword>
<keyword id="KW-0325">Glycoprotein</keyword>
<keyword id="KW-0326">Glycosidase</keyword>
<keyword id="KW-0378">Hydrolase</keyword>
<sequence length="14" mass="1577">TYPPVVXATLXRTH</sequence>
<accession>P29263</accession>
<comment type="catalytic activity">
    <reaction>
        <text>(R)-prunasin + H2O = mandelonitrile + D-glucose</text>
        <dbReference type="Rhea" id="RHEA:16489"/>
        <dbReference type="ChEBI" id="CHEBI:4167"/>
        <dbReference type="ChEBI" id="CHEBI:15377"/>
        <dbReference type="ChEBI" id="CHEBI:16910"/>
        <dbReference type="ChEBI" id="CHEBI:17396"/>
        <dbReference type="EC" id="3.2.1.118"/>
    </reaction>
</comment>
<comment type="subunit">
    <text>Monomer.</text>
</comment>
<comment type="developmental stage">
    <text>Absent from maturing black cherry fruits until 6 weeks after flowering. Then, concomitant with cotyledon development, the level of enzyme increases with specificity for embryonal tissues.</text>
</comment>
<comment type="PTM">
    <text>Glycosylated.</text>
</comment>
<protein>
    <recommendedName>
        <fullName>Prunasin beta-glucosidase 1</fullName>
        <ecNumber>3.2.1.118</ecNumber>
    </recommendedName>
    <alternativeName>
        <fullName>Prunasin beta-glucosidase I</fullName>
    </alternativeName>
    <alternativeName>
        <fullName>Prunasin hydrolase isozyme I</fullName>
        <shortName>PH I</shortName>
    </alternativeName>
</protein>
<proteinExistence type="evidence at protein level"/>